<reference key="1">
    <citation type="submission" date="2008-01" db="EMBL/GenBank/DDBJ databases">
        <authorList>
            <consortium name="NIH - Xenopus Gene Collection (XGC) project"/>
        </authorList>
    </citation>
    <scope>NUCLEOTIDE SEQUENCE [LARGE SCALE MRNA]</scope>
    <source>
        <tissue>Spleen</tissue>
    </source>
</reference>
<name>ACTMP_XENTR</name>
<organism>
    <name type="scientific">Xenopus tropicalis</name>
    <name type="common">Western clawed frog</name>
    <name type="synonym">Silurana tropicalis</name>
    <dbReference type="NCBI Taxonomy" id="8364"/>
    <lineage>
        <taxon>Eukaryota</taxon>
        <taxon>Metazoa</taxon>
        <taxon>Chordata</taxon>
        <taxon>Craniata</taxon>
        <taxon>Vertebrata</taxon>
        <taxon>Euteleostomi</taxon>
        <taxon>Amphibia</taxon>
        <taxon>Batrachia</taxon>
        <taxon>Anura</taxon>
        <taxon>Pipoidea</taxon>
        <taxon>Pipidae</taxon>
        <taxon>Xenopodinae</taxon>
        <taxon>Xenopus</taxon>
        <taxon>Silurana</taxon>
    </lineage>
</organism>
<accession>B0BM95</accession>
<keyword id="KW-0031">Aminopeptidase</keyword>
<keyword id="KW-0963">Cytoplasm</keyword>
<keyword id="KW-0378">Hydrolase</keyword>
<keyword id="KW-0645">Protease</keyword>
<keyword id="KW-1185">Reference proteome</keyword>
<evidence type="ECO:0000250" key="1">
    <source>
        <dbReference type="UniProtKB" id="J3QPC3"/>
    </source>
</evidence>
<evidence type="ECO:0000250" key="2">
    <source>
        <dbReference type="UniProtKB" id="Q5BKX5"/>
    </source>
</evidence>
<evidence type="ECO:0000256" key="3">
    <source>
        <dbReference type="SAM" id="MobiDB-lite"/>
    </source>
</evidence>
<evidence type="ECO:0000305" key="4"/>
<protein>
    <recommendedName>
        <fullName evidence="2">Actin maturation protease</fullName>
        <ecNumber evidence="2">3.4.11.-</ecNumber>
    </recommendedName>
    <alternativeName>
        <fullName evidence="2">Actin aminopeptidase ACTMAP</fullName>
    </alternativeName>
</protein>
<proteinExistence type="evidence at transcript level"/>
<feature type="chain" id="PRO_0000359785" description="Actin maturation protease">
    <location>
        <begin position="1"/>
        <end position="302"/>
    </location>
</feature>
<feature type="region of interest" description="Disordered" evidence="3">
    <location>
        <begin position="1"/>
        <end position="26"/>
    </location>
</feature>
<feature type="region of interest" description="Peptidase C39-like" evidence="2">
    <location>
        <begin position="85"/>
        <end position="205"/>
    </location>
</feature>
<feature type="active site" evidence="2">
    <location>
        <position position="93"/>
    </location>
</feature>
<dbReference type="EC" id="3.4.11.-" evidence="2"/>
<dbReference type="EMBL" id="BC158337">
    <property type="protein sequence ID" value="AAI58338.1"/>
    <property type="status" value="ALT_INIT"/>
    <property type="molecule type" value="mRNA"/>
</dbReference>
<dbReference type="RefSeq" id="NP_001120031.1">
    <property type="nucleotide sequence ID" value="NM_001126559.1"/>
</dbReference>
<dbReference type="RefSeq" id="XP_012823443.1">
    <property type="nucleotide sequence ID" value="XM_012967989.2"/>
</dbReference>
<dbReference type="RefSeq" id="XP_017951643.1">
    <property type="nucleotide sequence ID" value="XM_018096154.1"/>
</dbReference>
<dbReference type="FunCoup" id="B0BM95">
    <property type="interactions" value="90"/>
</dbReference>
<dbReference type="STRING" id="8364.ENSXETP00000024946"/>
<dbReference type="PaxDb" id="8364-ENSXETP00000060064"/>
<dbReference type="GeneID" id="100144997"/>
<dbReference type="KEGG" id="xtr:100144997"/>
<dbReference type="AGR" id="Xenbase:XB-GENE-5907400"/>
<dbReference type="CTD" id="284325"/>
<dbReference type="Xenbase" id="XB-GENE-5907400">
    <property type="gene designation" value="actmap"/>
</dbReference>
<dbReference type="eggNOG" id="ENOG502QQQD">
    <property type="taxonomic scope" value="Eukaryota"/>
</dbReference>
<dbReference type="HOGENOM" id="CLU_077492_1_0_1"/>
<dbReference type="InParanoid" id="B0BM95"/>
<dbReference type="OMA" id="QLWDYEQ"/>
<dbReference type="OrthoDB" id="198816at2759"/>
<dbReference type="TreeFam" id="TF314051"/>
<dbReference type="Proteomes" id="UP000008143">
    <property type="component" value="Chromosome 8"/>
</dbReference>
<dbReference type="Bgee" id="ENSXETG00000030884">
    <property type="expression patterns" value="Expressed in skeletal muscle tissue and 12 other cell types or tissues"/>
</dbReference>
<dbReference type="GO" id="GO:0005737">
    <property type="term" value="C:cytoplasm"/>
    <property type="evidence" value="ECO:0007669"/>
    <property type="project" value="UniProtKB-SubCell"/>
</dbReference>
<dbReference type="GO" id="GO:0004239">
    <property type="term" value="F:initiator methionyl aminopeptidase activity"/>
    <property type="evidence" value="ECO:0000250"/>
    <property type="project" value="UniProtKB"/>
</dbReference>
<dbReference type="GO" id="GO:0016485">
    <property type="term" value="P:protein processing"/>
    <property type="evidence" value="ECO:0000250"/>
    <property type="project" value="UniProtKB"/>
</dbReference>
<dbReference type="InterPro" id="IPR040043">
    <property type="entry name" value="ACTMAP"/>
</dbReference>
<dbReference type="PANTHER" id="PTHR28631:SF1">
    <property type="entry name" value="ACTIN MATURATION PROTEASE"/>
    <property type="match status" value="1"/>
</dbReference>
<dbReference type="PANTHER" id="PTHR28631">
    <property type="entry name" value="UPF0692 PROTEIN C19ORF54"/>
    <property type="match status" value="1"/>
</dbReference>
<dbReference type="Pfam" id="PF21646">
    <property type="entry name" value="ACTMAP-like_C"/>
    <property type="match status" value="1"/>
</dbReference>
<comment type="function">
    <text evidence="1 2">Actin maturation protease that specifically mediates the cleavage of immature acetylated N-terminal actin, thereby contributing to actin maturation (By similarity). Cleaves N-terminal acetylated methionine of immature cytoplasmic beta- and gamma-actin after translation (By similarity). Cleaves N-terminal acetylated cysteine of muscle alpha-actin after canonical removal of N-terminal methionine (By similarity).</text>
</comment>
<comment type="catalytic activity">
    <molecule>Actin maturation protease</molecule>
    <reaction evidence="2">
        <text>N-terminal N(alpha)-acetyl-L-methionyl-L-aspartyl-[protein] + H2O = N-terminal L-aspartyl-[protein] + N-acetyl-L-methionine</text>
        <dbReference type="Rhea" id="RHEA:74571"/>
        <dbReference type="Rhea" id="RHEA-COMP:12669"/>
        <dbReference type="Rhea" id="RHEA-COMP:12693"/>
        <dbReference type="ChEBI" id="CHEBI:15377"/>
        <dbReference type="ChEBI" id="CHEBI:64720"/>
        <dbReference type="ChEBI" id="CHEBI:71670"/>
        <dbReference type="ChEBI" id="CHEBI:133063"/>
    </reaction>
    <physiologicalReaction direction="left-to-right" evidence="2">
        <dbReference type="Rhea" id="RHEA:74572"/>
    </physiologicalReaction>
</comment>
<comment type="catalytic activity">
    <molecule>Actin maturation protease</molecule>
    <reaction evidence="2">
        <text>N-terminal N(alpha)-acetyl-L-methionyl-L-glutamyl-[protein] + H2O = N-terminal L-glutamyl-[protein] + N-acetyl-L-methionine</text>
        <dbReference type="Rhea" id="RHEA:74575"/>
        <dbReference type="Rhea" id="RHEA-COMP:12668"/>
        <dbReference type="Rhea" id="RHEA-COMP:12697"/>
        <dbReference type="ChEBI" id="CHEBI:15377"/>
        <dbReference type="ChEBI" id="CHEBI:64721"/>
        <dbReference type="ChEBI" id="CHEBI:71670"/>
        <dbReference type="ChEBI" id="CHEBI:133360"/>
    </reaction>
    <physiologicalReaction direction="left-to-right" evidence="2">
        <dbReference type="Rhea" id="RHEA:74576"/>
    </physiologicalReaction>
</comment>
<comment type="catalytic activity">
    <molecule>Actin maturation protease</molecule>
    <reaction evidence="1">
        <text>N-terminal N(alpha)-acetyl-L-cysteinyl-L-aspartyl-[protein] + H2O = N-terminal L-aspartyl-[protein] + N-acetyl-L-cysteine</text>
        <dbReference type="Rhea" id="RHEA:74579"/>
        <dbReference type="Rhea" id="RHEA-COMP:12669"/>
        <dbReference type="Rhea" id="RHEA-COMP:18395"/>
        <dbReference type="ChEBI" id="CHEBI:15377"/>
        <dbReference type="ChEBI" id="CHEBI:64720"/>
        <dbReference type="ChEBI" id="CHEBI:78236"/>
        <dbReference type="ChEBI" id="CHEBI:193599"/>
    </reaction>
    <physiologicalReaction direction="left-to-right" evidence="1">
        <dbReference type="Rhea" id="RHEA:74580"/>
    </physiologicalReaction>
</comment>
<comment type="catalytic activity">
    <molecule>Actin maturation protease</molecule>
    <reaction evidence="1">
        <text>N-terminal N(alpha)-acetyl-L-cysteinyl-L-glutamyl-[protein] + H2O = N-terminal L-glutamyl-[protein] + N-acetyl-L-cysteine</text>
        <dbReference type="Rhea" id="RHEA:74583"/>
        <dbReference type="Rhea" id="RHEA-COMP:12668"/>
        <dbReference type="Rhea" id="RHEA-COMP:18396"/>
        <dbReference type="ChEBI" id="CHEBI:15377"/>
        <dbReference type="ChEBI" id="CHEBI:64721"/>
        <dbReference type="ChEBI" id="CHEBI:78236"/>
        <dbReference type="ChEBI" id="CHEBI:193601"/>
    </reaction>
    <physiologicalReaction direction="left-to-right" evidence="1">
        <dbReference type="Rhea" id="RHEA:74584"/>
    </physiologicalReaction>
</comment>
<comment type="subcellular location">
    <subcellularLocation>
        <location evidence="2">Cytoplasm</location>
    </subcellularLocation>
</comment>
<comment type="similarity">
    <text evidence="4">Belongs to the ACTMAP family.</text>
</comment>
<comment type="sequence caution" evidence="4">
    <conflict type="erroneous initiation">
        <sequence resource="EMBL-CDS" id="AAI58338"/>
    </conflict>
    <text>Truncated N-terminus.</text>
</comment>
<gene>
    <name evidence="2" type="primary">actmap</name>
</gene>
<sequence>MPHTNEDPTAQQAGVILDPPPPLPPPPQIHLLPPTVAKCKFFKKVAENSDPSTGGCEELKKMIKNRQSRFNGELKWLLYNQYVPSLIQEGPQCGLVALWMAGKLLNLAHEAPLQTIVEAAVSRGYTAQGEMFSAANMAVLAKEVFGCRSELLTGGMDGENKGKILQQLTSGLPVLIPYDEDFNHEPCQREGHRAHWAVISGVLFGVRCGSFSPDPDIPGLCYPSSDSPSLEDLNIQEIYLVAKQGKSLRYQLWEYDCISRSNGQLIHLDPKRSNDGNVYIVPSGGVKAGLCGQIVLFQPKDV</sequence>